<comment type="function">
    <text evidence="1">Acts as a guanine nucleotide exchange factor (GEF) for RhoA and RhoB GTPases.</text>
</comment>
<comment type="subcellular location">
    <subcellularLocation>
        <location evidence="1">Cytoplasm</location>
    </subcellularLocation>
</comment>
<keyword id="KW-0963">Cytoplasm</keyword>
<keyword id="KW-0344">Guanine-nucleotide releasing factor</keyword>
<keyword id="KW-1185">Reference proteome</keyword>
<proteinExistence type="evidence at transcript level"/>
<accession>Q5ZLX4</accession>
<evidence type="ECO:0000250" key="1"/>
<evidence type="ECO:0000255" key="2">
    <source>
        <dbReference type="PROSITE-ProRule" id="PRU00062"/>
    </source>
</evidence>
<evidence type="ECO:0000255" key="3">
    <source>
        <dbReference type="PROSITE-ProRule" id="PRU00145"/>
    </source>
</evidence>
<evidence type="ECO:0000256" key="4">
    <source>
        <dbReference type="SAM" id="MobiDB-lite"/>
    </source>
</evidence>
<sequence>MVAKDYPFYLTVKRANCALDVEAASSPAKETEEPSNKRVKPLSRVTSLANLIPPVRATPLKRFSQTLQRSISFRSDSRPDLFSPRPWSRNTPAANTKRRDSKLWSETFDVCVNHMLTSKEIKRQEAIFELSKGEEDLIEDLKLAKKAYHDPMLKLSIMTEQELNQIFGTLDSLIPLHEDLLRRLQEVRKSDGSTEHVGHILVGWLPCLNSYDSYCSNQVAAKALLDHKKQDHRVQDFLQRCLESPFSRKLDLWNFLDIPRSRLVKYPLLLREILRHTPNDHPDQQHLEEAINIIQGIVAEINIKTGESECQYYKERLIYLEGGQRDSLIDNSRVLCCHGELKNNRGVKLHVFLFQEVLVITRAITHNEQLCYQLYRQPIPVMDLVLEDLQDGEVRLGGSIRGAFSNNERIKNFFRVSFKNGSQSQSHSLQANDSFNKQQWLNCIRQAKEKVTCAGKAGVLSSEACFILSPNGSRVSQGETMIEQMDQSDSESDCSMDTSEISIDCERMEQTNPCENEKQIETNV</sequence>
<reference key="1">
    <citation type="journal article" date="2005" name="Genome Biol.">
        <title>Full-length cDNAs from chicken bursal lymphocytes to facilitate gene function analysis.</title>
        <authorList>
            <person name="Caldwell R.B."/>
            <person name="Kierzek A.M."/>
            <person name="Arakawa H."/>
            <person name="Bezzubov Y."/>
            <person name="Zaim J."/>
            <person name="Fiedler P."/>
            <person name="Kutter S."/>
            <person name="Blagodatski A."/>
            <person name="Kostovska D."/>
            <person name="Koter M."/>
            <person name="Plachy J."/>
            <person name="Carninci P."/>
            <person name="Hayashizaki Y."/>
            <person name="Buerstedde J.-M."/>
        </authorList>
    </citation>
    <scope>NUCLEOTIDE SEQUENCE [LARGE SCALE MRNA]</scope>
    <source>
        <strain>CB</strain>
        <tissue>Bursa of Fabricius</tissue>
    </source>
</reference>
<protein>
    <recommendedName>
        <fullName>Rho guanine nucleotide exchange factor 3</fullName>
    </recommendedName>
</protein>
<feature type="chain" id="PRO_0000314288" description="Rho guanine nucleotide exchange factor 3">
    <location>
        <begin position="1"/>
        <end position="524"/>
    </location>
</feature>
<feature type="domain" description="DH" evidence="2">
    <location>
        <begin position="121"/>
        <end position="303"/>
    </location>
</feature>
<feature type="domain" description="PH" evidence="3">
    <location>
        <begin position="290"/>
        <end position="448"/>
    </location>
</feature>
<feature type="region of interest" description="Disordered" evidence="4">
    <location>
        <begin position="75"/>
        <end position="98"/>
    </location>
</feature>
<dbReference type="EMBL" id="AJ719610">
    <property type="protein sequence ID" value="CAG31269.1"/>
    <property type="molecule type" value="mRNA"/>
</dbReference>
<dbReference type="RefSeq" id="NP_001025766.1">
    <property type="nucleotide sequence ID" value="NM_001030595.1"/>
</dbReference>
<dbReference type="SMR" id="Q5ZLX4"/>
<dbReference type="FunCoup" id="Q5ZLX4">
    <property type="interactions" value="266"/>
</dbReference>
<dbReference type="STRING" id="9031.ENSGALP00000070863"/>
<dbReference type="PaxDb" id="9031-ENSGALP00000008791"/>
<dbReference type="GeneID" id="416000"/>
<dbReference type="KEGG" id="gga:416000"/>
<dbReference type="CTD" id="50650"/>
<dbReference type="VEuPathDB" id="HostDB:geneid_416000"/>
<dbReference type="eggNOG" id="KOG4305">
    <property type="taxonomic scope" value="Eukaryota"/>
</dbReference>
<dbReference type="InParanoid" id="Q5ZLX4"/>
<dbReference type="OrthoDB" id="1716625at2759"/>
<dbReference type="PhylomeDB" id="Q5ZLX4"/>
<dbReference type="PRO" id="PR:Q5ZLX4"/>
<dbReference type="Proteomes" id="UP000000539">
    <property type="component" value="Unassembled WGS sequence"/>
</dbReference>
<dbReference type="GO" id="GO:0005737">
    <property type="term" value="C:cytoplasm"/>
    <property type="evidence" value="ECO:0007669"/>
    <property type="project" value="UniProtKB-SubCell"/>
</dbReference>
<dbReference type="GO" id="GO:0005085">
    <property type="term" value="F:guanyl-nucleotide exchange factor activity"/>
    <property type="evidence" value="ECO:0007669"/>
    <property type="project" value="UniProtKB-KW"/>
</dbReference>
<dbReference type="GO" id="GO:0035556">
    <property type="term" value="P:intracellular signal transduction"/>
    <property type="evidence" value="ECO:0007669"/>
    <property type="project" value="InterPro"/>
</dbReference>
<dbReference type="GO" id="GO:0035025">
    <property type="term" value="P:positive regulation of Rho protein signal transduction"/>
    <property type="evidence" value="ECO:0000318"/>
    <property type="project" value="GO_Central"/>
</dbReference>
<dbReference type="CDD" id="cd10572">
    <property type="entry name" value="PH_RhoGEF3_XPLN"/>
    <property type="match status" value="1"/>
</dbReference>
<dbReference type="CDD" id="cd00160">
    <property type="entry name" value="RhoGEF"/>
    <property type="match status" value="1"/>
</dbReference>
<dbReference type="FunFam" id="2.30.29.30:FF:000151">
    <property type="entry name" value="Rho guanine nucleotide exchange factor 3"/>
    <property type="match status" value="1"/>
</dbReference>
<dbReference type="FunFam" id="1.20.900.10:FF:000010">
    <property type="entry name" value="Rho guanine nucleotide exchange factor 3 isoform 1"/>
    <property type="match status" value="1"/>
</dbReference>
<dbReference type="Gene3D" id="1.20.900.10">
    <property type="entry name" value="Dbl homology (DH) domain"/>
    <property type="match status" value="1"/>
</dbReference>
<dbReference type="Gene3D" id="2.30.29.30">
    <property type="entry name" value="Pleckstrin-homology domain (PH domain)/Phosphotyrosine-binding domain (PTB)"/>
    <property type="match status" value="1"/>
</dbReference>
<dbReference type="InterPro" id="IPR035899">
    <property type="entry name" value="DBL_dom_sf"/>
</dbReference>
<dbReference type="InterPro" id="IPR000219">
    <property type="entry name" value="DH_dom"/>
</dbReference>
<dbReference type="InterPro" id="IPR051480">
    <property type="entry name" value="Endocytic_GEF_Adapter"/>
</dbReference>
<dbReference type="InterPro" id="IPR001331">
    <property type="entry name" value="GDS_CDC24_CS"/>
</dbReference>
<dbReference type="InterPro" id="IPR011993">
    <property type="entry name" value="PH-like_dom_sf"/>
</dbReference>
<dbReference type="InterPro" id="IPR001849">
    <property type="entry name" value="PH_domain"/>
</dbReference>
<dbReference type="InterPro" id="IPR044129">
    <property type="entry name" value="PH_RhoGEF3_XPLN"/>
</dbReference>
<dbReference type="InterPro" id="IPR055251">
    <property type="entry name" value="SOS1_NGEF_PH"/>
</dbReference>
<dbReference type="PANTHER" id="PTHR46006:SF2">
    <property type="entry name" value="RHO GUANINE NUCLEOTIDE EXCHANGE FACTOR 3"/>
    <property type="match status" value="1"/>
</dbReference>
<dbReference type="PANTHER" id="PTHR46006">
    <property type="entry name" value="RHO GUANINE NUCLEOTIDE EXCHANGE FACTOR AT 64C, ISOFORM A"/>
    <property type="match status" value="1"/>
</dbReference>
<dbReference type="Pfam" id="PF00621">
    <property type="entry name" value="RhoGEF"/>
    <property type="match status" value="1"/>
</dbReference>
<dbReference type="Pfam" id="PF22697">
    <property type="entry name" value="SOS1_NGEF_PH"/>
    <property type="match status" value="1"/>
</dbReference>
<dbReference type="SMART" id="SM00233">
    <property type="entry name" value="PH"/>
    <property type="match status" value="1"/>
</dbReference>
<dbReference type="SMART" id="SM00325">
    <property type="entry name" value="RhoGEF"/>
    <property type="match status" value="1"/>
</dbReference>
<dbReference type="SUPFAM" id="SSF48065">
    <property type="entry name" value="DBL homology domain (DH-domain)"/>
    <property type="match status" value="1"/>
</dbReference>
<dbReference type="SUPFAM" id="SSF50729">
    <property type="entry name" value="PH domain-like"/>
    <property type="match status" value="1"/>
</dbReference>
<dbReference type="PROSITE" id="PS00741">
    <property type="entry name" value="DH_1"/>
    <property type="match status" value="1"/>
</dbReference>
<dbReference type="PROSITE" id="PS50010">
    <property type="entry name" value="DH_2"/>
    <property type="match status" value="1"/>
</dbReference>
<dbReference type="PROSITE" id="PS50003">
    <property type="entry name" value="PH_DOMAIN"/>
    <property type="match status" value="1"/>
</dbReference>
<organism>
    <name type="scientific">Gallus gallus</name>
    <name type="common">Chicken</name>
    <dbReference type="NCBI Taxonomy" id="9031"/>
    <lineage>
        <taxon>Eukaryota</taxon>
        <taxon>Metazoa</taxon>
        <taxon>Chordata</taxon>
        <taxon>Craniata</taxon>
        <taxon>Vertebrata</taxon>
        <taxon>Euteleostomi</taxon>
        <taxon>Archelosauria</taxon>
        <taxon>Archosauria</taxon>
        <taxon>Dinosauria</taxon>
        <taxon>Saurischia</taxon>
        <taxon>Theropoda</taxon>
        <taxon>Coelurosauria</taxon>
        <taxon>Aves</taxon>
        <taxon>Neognathae</taxon>
        <taxon>Galloanserae</taxon>
        <taxon>Galliformes</taxon>
        <taxon>Phasianidae</taxon>
        <taxon>Phasianinae</taxon>
        <taxon>Gallus</taxon>
    </lineage>
</organism>
<gene>
    <name type="primary">Arhgef3</name>
    <name type="ORF">RCJMB04_4i12</name>
</gene>
<name>ARHG3_CHICK</name>